<accession>B7H4Q6</accession>
<sequence length="94" mass="10056">MLKPLGDRVVIELVQAEEKTASGIVLPDTAKEKPQEGKVVAVGTGRVLENGERVALEVAAGDLIIFSKYAGTEVKYEGTDYLILRESDILAVIG</sequence>
<gene>
    <name evidence="1" type="primary">groES</name>
    <name evidence="1" type="synonym">groS</name>
    <name type="ordered locus">BCB4264_A0297</name>
</gene>
<dbReference type="EMBL" id="CP001176">
    <property type="protein sequence ID" value="ACK63674.1"/>
    <property type="molecule type" value="Genomic_DNA"/>
</dbReference>
<dbReference type="RefSeq" id="WP_000917311.1">
    <property type="nucleotide sequence ID" value="NZ_VEHB01000024.1"/>
</dbReference>
<dbReference type="SMR" id="B7H4Q6"/>
<dbReference type="GeneID" id="72447091"/>
<dbReference type="KEGG" id="bcb:BCB4264_A0297"/>
<dbReference type="HOGENOM" id="CLU_132825_2_0_9"/>
<dbReference type="Proteomes" id="UP000007096">
    <property type="component" value="Chromosome"/>
</dbReference>
<dbReference type="GO" id="GO:0005737">
    <property type="term" value="C:cytoplasm"/>
    <property type="evidence" value="ECO:0007669"/>
    <property type="project" value="UniProtKB-SubCell"/>
</dbReference>
<dbReference type="GO" id="GO:0005524">
    <property type="term" value="F:ATP binding"/>
    <property type="evidence" value="ECO:0007669"/>
    <property type="project" value="InterPro"/>
</dbReference>
<dbReference type="GO" id="GO:0046872">
    <property type="term" value="F:metal ion binding"/>
    <property type="evidence" value="ECO:0007669"/>
    <property type="project" value="TreeGrafter"/>
</dbReference>
<dbReference type="GO" id="GO:0044183">
    <property type="term" value="F:protein folding chaperone"/>
    <property type="evidence" value="ECO:0007669"/>
    <property type="project" value="InterPro"/>
</dbReference>
<dbReference type="GO" id="GO:0051087">
    <property type="term" value="F:protein-folding chaperone binding"/>
    <property type="evidence" value="ECO:0007669"/>
    <property type="project" value="TreeGrafter"/>
</dbReference>
<dbReference type="GO" id="GO:0051082">
    <property type="term" value="F:unfolded protein binding"/>
    <property type="evidence" value="ECO:0007669"/>
    <property type="project" value="TreeGrafter"/>
</dbReference>
<dbReference type="GO" id="GO:0051085">
    <property type="term" value="P:chaperone cofactor-dependent protein refolding"/>
    <property type="evidence" value="ECO:0007669"/>
    <property type="project" value="TreeGrafter"/>
</dbReference>
<dbReference type="CDD" id="cd00320">
    <property type="entry name" value="cpn10"/>
    <property type="match status" value="1"/>
</dbReference>
<dbReference type="FunFam" id="2.30.33.40:FF:000001">
    <property type="entry name" value="10 kDa chaperonin"/>
    <property type="match status" value="1"/>
</dbReference>
<dbReference type="Gene3D" id="2.30.33.40">
    <property type="entry name" value="GroES chaperonin"/>
    <property type="match status" value="1"/>
</dbReference>
<dbReference type="HAMAP" id="MF_00580">
    <property type="entry name" value="CH10"/>
    <property type="match status" value="1"/>
</dbReference>
<dbReference type="InterPro" id="IPR020818">
    <property type="entry name" value="Chaperonin_GroES"/>
</dbReference>
<dbReference type="InterPro" id="IPR037124">
    <property type="entry name" value="Chaperonin_GroES_sf"/>
</dbReference>
<dbReference type="InterPro" id="IPR018369">
    <property type="entry name" value="Chaprnonin_Cpn10_CS"/>
</dbReference>
<dbReference type="InterPro" id="IPR011032">
    <property type="entry name" value="GroES-like_sf"/>
</dbReference>
<dbReference type="NCBIfam" id="NF001527">
    <property type="entry name" value="PRK00364.1-2"/>
    <property type="match status" value="1"/>
</dbReference>
<dbReference type="NCBIfam" id="NF001530">
    <property type="entry name" value="PRK00364.1-6"/>
    <property type="match status" value="1"/>
</dbReference>
<dbReference type="NCBIfam" id="NF001531">
    <property type="entry name" value="PRK00364.2-2"/>
    <property type="match status" value="1"/>
</dbReference>
<dbReference type="NCBIfam" id="NF001533">
    <property type="entry name" value="PRK00364.2-4"/>
    <property type="match status" value="1"/>
</dbReference>
<dbReference type="NCBIfam" id="NF001534">
    <property type="entry name" value="PRK00364.2-5"/>
    <property type="match status" value="1"/>
</dbReference>
<dbReference type="PANTHER" id="PTHR10772">
    <property type="entry name" value="10 KDA HEAT SHOCK PROTEIN"/>
    <property type="match status" value="1"/>
</dbReference>
<dbReference type="PANTHER" id="PTHR10772:SF58">
    <property type="entry name" value="CO-CHAPERONIN GROES"/>
    <property type="match status" value="1"/>
</dbReference>
<dbReference type="Pfam" id="PF00166">
    <property type="entry name" value="Cpn10"/>
    <property type="match status" value="1"/>
</dbReference>
<dbReference type="PRINTS" id="PR00297">
    <property type="entry name" value="CHAPERONIN10"/>
</dbReference>
<dbReference type="SMART" id="SM00883">
    <property type="entry name" value="Cpn10"/>
    <property type="match status" value="1"/>
</dbReference>
<dbReference type="SUPFAM" id="SSF50129">
    <property type="entry name" value="GroES-like"/>
    <property type="match status" value="1"/>
</dbReference>
<dbReference type="PROSITE" id="PS00681">
    <property type="entry name" value="CHAPERONINS_CPN10"/>
    <property type="match status" value="1"/>
</dbReference>
<evidence type="ECO:0000255" key="1">
    <source>
        <dbReference type="HAMAP-Rule" id="MF_00580"/>
    </source>
</evidence>
<organism>
    <name type="scientific">Bacillus cereus (strain B4264)</name>
    <dbReference type="NCBI Taxonomy" id="405532"/>
    <lineage>
        <taxon>Bacteria</taxon>
        <taxon>Bacillati</taxon>
        <taxon>Bacillota</taxon>
        <taxon>Bacilli</taxon>
        <taxon>Bacillales</taxon>
        <taxon>Bacillaceae</taxon>
        <taxon>Bacillus</taxon>
        <taxon>Bacillus cereus group</taxon>
    </lineage>
</organism>
<feature type="chain" id="PRO_1000129624" description="Co-chaperonin GroES">
    <location>
        <begin position="1"/>
        <end position="94"/>
    </location>
</feature>
<reference key="1">
    <citation type="submission" date="2008-10" db="EMBL/GenBank/DDBJ databases">
        <title>Genome sequence of Bacillus cereus B4264.</title>
        <authorList>
            <person name="Dodson R.J."/>
            <person name="Durkin A.S."/>
            <person name="Rosovitz M.J."/>
            <person name="Rasko D.A."/>
            <person name="Hoffmaster A."/>
            <person name="Ravel J."/>
            <person name="Sutton G."/>
        </authorList>
    </citation>
    <scope>NUCLEOTIDE SEQUENCE [LARGE SCALE GENOMIC DNA]</scope>
    <source>
        <strain>B4264</strain>
    </source>
</reference>
<keyword id="KW-0143">Chaperone</keyword>
<keyword id="KW-0963">Cytoplasm</keyword>
<protein>
    <recommendedName>
        <fullName evidence="1">Co-chaperonin GroES</fullName>
    </recommendedName>
    <alternativeName>
        <fullName evidence="1">10 kDa chaperonin</fullName>
    </alternativeName>
    <alternativeName>
        <fullName evidence="1">Chaperonin-10</fullName>
        <shortName evidence="1">Cpn10</shortName>
    </alternativeName>
</protein>
<proteinExistence type="inferred from homology"/>
<comment type="function">
    <text evidence="1">Together with the chaperonin GroEL, plays an essential role in assisting protein folding. The GroEL-GroES system forms a nano-cage that allows encapsulation of the non-native substrate proteins and provides a physical environment optimized to promote and accelerate protein folding. GroES binds to the apical surface of the GroEL ring, thereby capping the opening of the GroEL channel.</text>
</comment>
<comment type="subunit">
    <text evidence="1">Heptamer of 7 subunits arranged in a ring. Interacts with the chaperonin GroEL.</text>
</comment>
<comment type="subcellular location">
    <subcellularLocation>
        <location evidence="1">Cytoplasm</location>
    </subcellularLocation>
</comment>
<comment type="similarity">
    <text evidence="1">Belongs to the GroES chaperonin family.</text>
</comment>
<name>CH10_BACC4</name>